<keyword id="KW-0131">Cell cycle</keyword>
<keyword id="KW-0132">Cell division</keyword>
<keyword id="KW-0175">Coiled coil</keyword>
<keyword id="KW-0963">Cytoplasm</keyword>
<keyword id="KW-0717">Septation</keyword>
<feature type="chain" id="PRO_0000346125" description="Cell division protein ZapA">
    <location>
        <begin position="1"/>
        <end position="99"/>
    </location>
</feature>
<feature type="coiled-coil region" evidence="2">
    <location>
        <begin position="76"/>
        <end position="96"/>
    </location>
</feature>
<accession>Q0I2U9</accession>
<evidence type="ECO:0000250" key="1"/>
<evidence type="ECO:0000255" key="2"/>
<evidence type="ECO:0000305" key="3"/>
<reference key="1">
    <citation type="journal article" date="2007" name="J. Bacteriol.">
        <title>Complete genome sequence of Haemophilus somnus (Histophilus somni) strain 129Pt and comparison to Haemophilus ducreyi 35000HP and Haemophilus influenzae Rd.</title>
        <authorList>
            <person name="Challacombe J.F."/>
            <person name="Duncan A.J."/>
            <person name="Brettin T.S."/>
            <person name="Bruce D."/>
            <person name="Chertkov O."/>
            <person name="Detter J.C."/>
            <person name="Han C.S."/>
            <person name="Misra M."/>
            <person name="Richardson P."/>
            <person name="Tapia R."/>
            <person name="Thayer N."/>
            <person name="Xie G."/>
            <person name="Inzana T.J."/>
        </authorList>
    </citation>
    <scope>NUCLEOTIDE SEQUENCE [LARGE SCALE GENOMIC DNA]</scope>
    <source>
        <strain>129Pt</strain>
    </source>
</reference>
<proteinExistence type="inferred from homology"/>
<sequence length="99" mass="11301">MSKLIELSVSGQVLRLNCPPEQHDALRQAAHLLDNRVMEMRERTGILQMEKILSIVALNLSFELMQEQQKTQTIENVINQKIAQLEGSLENILAQKTTF</sequence>
<organism>
    <name type="scientific">Histophilus somni (strain 129Pt)</name>
    <name type="common">Haemophilus somnus</name>
    <dbReference type="NCBI Taxonomy" id="205914"/>
    <lineage>
        <taxon>Bacteria</taxon>
        <taxon>Pseudomonadati</taxon>
        <taxon>Pseudomonadota</taxon>
        <taxon>Gammaproteobacteria</taxon>
        <taxon>Pasteurellales</taxon>
        <taxon>Pasteurellaceae</taxon>
        <taxon>Histophilus</taxon>
    </lineage>
</organism>
<dbReference type="EMBL" id="CP000436">
    <property type="protein sequence ID" value="ABI24961.1"/>
    <property type="molecule type" value="Genomic_DNA"/>
</dbReference>
<dbReference type="SMR" id="Q0I2U9"/>
<dbReference type="KEGG" id="hso:HS_0684"/>
<dbReference type="eggNOG" id="COG3027">
    <property type="taxonomic scope" value="Bacteria"/>
</dbReference>
<dbReference type="HOGENOM" id="CLU_116623_3_0_6"/>
<dbReference type="GO" id="GO:0032153">
    <property type="term" value="C:cell division site"/>
    <property type="evidence" value="ECO:0007669"/>
    <property type="project" value="TreeGrafter"/>
</dbReference>
<dbReference type="GO" id="GO:0030428">
    <property type="term" value="C:cell septum"/>
    <property type="evidence" value="ECO:0007669"/>
    <property type="project" value="TreeGrafter"/>
</dbReference>
<dbReference type="GO" id="GO:0005829">
    <property type="term" value="C:cytosol"/>
    <property type="evidence" value="ECO:0007669"/>
    <property type="project" value="TreeGrafter"/>
</dbReference>
<dbReference type="GO" id="GO:0000917">
    <property type="term" value="P:division septum assembly"/>
    <property type="evidence" value="ECO:0007669"/>
    <property type="project" value="UniProtKB-KW"/>
</dbReference>
<dbReference type="GO" id="GO:0043093">
    <property type="term" value="P:FtsZ-dependent cytokinesis"/>
    <property type="evidence" value="ECO:0007669"/>
    <property type="project" value="TreeGrafter"/>
</dbReference>
<dbReference type="GO" id="GO:0000921">
    <property type="term" value="P:septin ring assembly"/>
    <property type="evidence" value="ECO:0007669"/>
    <property type="project" value="TreeGrafter"/>
</dbReference>
<dbReference type="Gene3D" id="1.20.5.50">
    <property type="match status" value="1"/>
</dbReference>
<dbReference type="Gene3D" id="3.30.160.880">
    <property type="entry name" value="Cell division protein ZapA protomer, N-terminal domain"/>
    <property type="match status" value="1"/>
</dbReference>
<dbReference type="InterPro" id="IPR007838">
    <property type="entry name" value="Cell_div_ZapA-like"/>
</dbReference>
<dbReference type="InterPro" id="IPR036192">
    <property type="entry name" value="Cell_div_ZapA-like_sf"/>
</dbReference>
<dbReference type="InterPro" id="IPR042233">
    <property type="entry name" value="Cell_div_ZapA_N"/>
</dbReference>
<dbReference type="PANTHER" id="PTHR34981">
    <property type="entry name" value="CELL DIVISION PROTEIN ZAPA"/>
    <property type="match status" value="1"/>
</dbReference>
<dbReference type="PANTHER" id="PTHR34981:SF1">
    <property type="entry name" value="CELL DIVISION PROTEIN ZAPA"/>
    <property type="match status" value="1"/>
</dbReference>
<dbReference type="Pfam" id="PF05164">
    <property type="entry name" value="ZapA"/>
    <property type="match status" value="1"/>
</dbReference>
<dbReference type="SUPFAM" id="SSF102829">
    <property type="entry name" value="Cell division protein ZapA-like"/>
    <property type="match status" value="1"/>
</dbReference>
<protein>
    <recommendedName>
        <fullName>Cell division protein ZapA</fullName>
    </recommendedName>
    <alternativeName>
        <fullName>Z ring-associated protein ZapA</fullName>
    </alternativeName>
</protein>
<gene>
    <name type="primary">zapA</name>
    <name type="ordered locus">HS_0684</name>
</gene>
<comment type="function">
    <text evidence="1">Activator of cell division through the inhibition of FtsZ GTPase activity, therefore promoting FtsZ assembly into bundles of protofilaments necessary for the formation of the division Z ring. It is recruited early at mid-cell but it is not essential for cell division (By similarity).</text>
</comment>
<comment type="subunit">
    <text evidence="1">Homodimer. Interacts with FtsZ (By similarity).</text>
</comment>
<comment type="subcellular location">
    <subcellularLocation>
        <location evidence="1">Cytoplasm</location>
    </subcellularLocation>
    <text evidence="1">Localizes at mid-cell.</text>
</comment>
<comment type="similarity">
    <text evidence="3">Belongs to the ZapA family. Type 1 subfamily.</text>
</comment>
<name>ZAPA_HISS1</name>